<protein>
    <recommendedName>
        <fullName>Hippocalcin-like protein 1</fullName>
    </recommendedName>
    <alternativeName>
        <fullName>Protein Rem-1</fullName>
    </alternativeName>
</protein>
<organism>
    <name type="scientific">Gallus gallus</name>
    <name type="common">Chicken</name>
    <dbReference type="NCBI Taxonomy" id="9031"/>
    <lineage>
        <taxon>Eukaryota</taxon>
        <taxon>Metazoa</taxon>
        <taxon>Chordata</taxon>
        <taxon>Craniata</taxon>
        <taxon>Vertebrata</taxon>
        <taxon>Euteleostomi</taxon>
        <taxon>Archelosauria</taxon>
        <taxon>Archosauria</taxon>
        <taxon>Dinosauria</taxon>
        <taxon>Saurischia</taxon>
        <taxon>Theropoda</taxon>
        <taxon>Coelurosauria</taxon>
        <taxon>Aves</taxon>
        <taxon>Neognathae</taxon>
        <taxon>Galloanserae</taxon>
        <taxon>Galliformes</taxon>
        <taxon>Phasianidae</taxon>
        <taxon>Phasianinae</taxon>
        <taxon>Gallus</taxon>
    </lineage>
</organism>
<name>HPCL1_CHICK</name>
<gene>
    <name type="primary">HPCAL1</name>
    <name type="synonym">REM1</name>
</gene>
<evidence type="ECO:0000250" key="1"/>
<evidence type="ECO:0000255" key="2">
    <source>
        <dbReference type="PROSITE-ProRule" id="PRU00448"/>
    </source>
</evidence>
<evidence type="ECO:0000269" key="3">
    <source>
    </source>
</evidence>
<evidence type="ECO:0000305" key="4"/>
<proteinExistence type="evidence at protein level"/>
<accession>P42324</accession>
<comment type="interaction">
    <interactant intactId="EBI-1636399">
        <id>P42324</id>
    </interactant>
    <interactant intactId="EBI-1635766">
        <id>Q8AYS8</id>
        <label>KCNMA1</label>
    </interactant>
    <organismsDiffer>false</organismsDiffer>
    <experiments>3</experiments>
</comment>
<comment type="tissue specificity">
    <text evidence="3">Expressed in hemopoietic cells, but also in the fibroblasts, bone marrow, brain, eye and gut.</text>
</comment>
<comment type="induction">
    <text evidence="3">By the MYB-ETS fusion oncogene.</text>
</comment>
<comment type="miscellaneous">
    <text evidence="1">Probably binds two or three calcium ions.</text>
</comment>
<comment type="similarity">
    <text evidence="4">Belongs to the recoverin family.</text>
</comment>
<keyword id="KW-0106">Calcium</keyword>
<keyword id="KW-0449">Lipoprotein</keyword>
<keyword id="KW-0479">Metal-binding</keyword>
<keyword id="KW-0519">Myristate</keyword>
<keyword id="KW-1185">Reference proteome</keyword>
<keyword id="KW-0677">Repeat</keyword>
<sequence length="193" mass="22269">MGKQNSKLRPEVLQDLRENTEFTDHELQEWYKGFLKDCPTGHLTVEEFKKIYANFFPYGDASKFAEHVFRTFDTNGDGTIDFREFIIALSVTSRGKLEQKLKWAFSMYDLDGNGYISRGEMLEIVQAIYKMVSSVMKMPEDESTPEKRTDKIFRQMDTNNDGKLSLEEFIKGAKSDPSIVRLLQCDPSSASQF</sequence>
<dbReference type="EMBL" id="X80875">
    <property type="protein sequence ID" value="CAA56843.1"/>
    <property type="molecule type" value="mRNA"/>
</dbReference>
<dbReference type="PIR" id="I50676">
    <property type="entry name" value="I50676"/>
</dbReference>
<dbReference type="RefSeq" id="NP_990565.1">
    <property type="nucleotide sequence ID" value="NM_205234.2"/>
</dbReference>
<dbReference type="RefSeq" id="XP_015131510.1">
    <property type="nucleotide sequence ID" value="XM_015276024.1"/>
</dbReference>
<dbReference type="RefSeq" id="XP_015131512.1">
    <property type="nucleotide sequence ID" value="XM_015276026.4"/>
</dbReference>
<dbReference type="RefSeq" id="XP_015131513.1">
    <property type="nucleotide sequence ID" value="XM_015276027.4"/>
</dbReference>
<dbReference type="RefSeq" id="XP_015131514.1">
    <property type="nucleotide sequence ID" value="XM_015276028.3"/>
</dbReference>
<dbReference type="RefSeq" id="XP_025004321.1">
    <property type="nucleotide sequence ID" value="XM_025148553.3"/>
</dbReference>
<dbReference type="RefSeq" id="XP_025004323.1">
    <property type="nucleotide sequence ID" value="XM_025148555.3"/>
</dbReference>
<dbReference type="RefSeq" id="XP_040552794.1">
    <property type="nucleotide sequence ID" value="XM_040696860.2"/>
</dbReference>
<dbReference type="RefSeq" id="XP_040552798.1">
    <property type="nucleotide sequence ID" value="XM_040696864.2"/>
</dbReference>
<dbReference type="RefSeq" id="XP_046769155.1">
    <property type="nucleotide sequence ID" value="XM_046913199.1"/>
</dbReference>
<dbReference type="RefSeq" id="XP_046769156.1">
    <property type="nucleotide sequence ID" value="XM_046913200.1"/>
</dbReference>
<dbReference type="RefSeq" id="XP_046769157.1">
    <property type="nucleotide sequence ID" value="XM_046913201.1"/>
</dbReference>
<dbReference type="RefSeq" id="XP_046769158.1">
    <property type="nucleotide sequence ID" value="XM_046913202.1"/>
</dbReference>
<dbReference type="RefSeq" id="XP_046769159.1">
    <property type="nucleotide sequence ID" value="XM_046913203.1"/>
</dbReference>
<dbReference type="RefSeq" id="XP_046769160.1">
    <property type="nucleotide sequence ID" value="XM_046913204.1"/>
</dbReference>
<dbReference type="RefSeq" id="XP_046769161.1">
    <property type="nucleotide sequence ID" value="XM_046913205.1"/>
</dbReference>
<dbReference type="RefSeq" id="XP_046769162.1">
    <property type="nucleotide sequence ID" value="XM_046913206.1"/>
</dbReference>
<dbReference type="RefSeq" id="XP_046769163.1">
    <property type="nucleotide sequence ID" value="XM_046913207.1"/>
</dbReference>
<dbReference type="RefSeq" id="XP_046769164.1">
    <property type="nucleotide sequence ID" value="XM_046913208.1"/>
</dbReference>
<dbReference type="RefSeq" id="XP_046794474.1">
    <property type="nucleotide sequence ID" value="XM_046938518.1"/>
</dbReference>
<dbReference type="RefSeq" id="XP_046794475.1">
    <property type="nucleotide sequence ID" value="XM_046938519.1"/>
</dbReference>
<dbReference type="RefSeq" id="XP_046794476.1">
    <property type="nucleotide sequence ID" value="XM_046938520.1"/>
</dbReference>
<dbReference type="SMR" id="P42324"/>
<dbReference type="BioGRID" id="676425">
    <property type="interactions" value="1"/>
</dbReference>
<dbReference type="FunCoup" id="P42324">
    <property type="interactions" value="2205"/>
</dbReference>
<dbReference type="IntAct" id="P42324">
    <property type="interactions" value="1"/>
</dbReference>
<dbReference type="PaxDb" id="9031-ENSGALP00000036116"/>
<dbReference type="Ensembl" id="ENSGALT00010005714.1">
    <property type="protein sequence ID" value="ENSGALP00010003553.1"/>
    <property type="gene ID" value="ENSGALG00010002474.1"/>
</dbReference>
<dbReference type="GeneID" id="396161"/>
<dbReference type="KEGG" id="gga:396161"/>
<dbReference type="CTD" id="3241"/>
<dbReference type="VEuPathDB" id="HostDB:geneid_396161"/>
<dbReference type="eggNOG" id="KOG0044">
    <property type="taxonomic scope" value="Eukaryota"/>
</dbReference>
<dbReference type="GeneTree" id="ENSGT00940000154645"/>
<dbReference type="HOGENOM" id="CLU_072366_1_0_1"/>
<dbReference type="InParanoid" id="P42324"/>
<dbReference type="OMA" id="RQHTEFN"/>
<dbReference type="OrthoDB" id="191686at2759"/>
<dbReference type="PhylomeDB" id="P42324"/>
<dbReference type="TreeFam" id="TF300009"/>
<dbReference type="PRO" id="PR:P42324"/>
<dbReference type="Proteomes" id="UP000000539">
    <property type="component" value="Chromosome 3"/>
</dbReference>
<dbReference type="Bgee" id="ENSGALG00000016443">
    <property type="expression patterns" value="Expressed in brain and 14 other cell types or tissues"/>
</dbReference>
<dbReference type="GO" id="GO:0005509">
    <property type="term" value="F:calcium ion binding"/>
    <property type="evidence" value="ECO:0000318"/>
    <property type="project" value="GO_Central"/>
</dbReference>
<dbReference type="GO" id="GO:0009966">
    <property type="term" value="P:regulation of signal transduction"/>
    <property type="evidence" value="ECO:0000318"/>
    <property type="project" value="GO_Central"/>
</dbReference>
<dbReference type="CDD" id="cd00051">
    <property type="entry name" value="EFh"/>
    <property type="match status" value="2"/>
</dbReference>
<dbReference type="FunFam" id="1.10.238.10:FF:000078">
    <property type="entry name" value="Hippocalcin-like 1"/>
    <property type="match status" value="1"/>
</dbReference>
<dbReference type="FunFam" id="1.10.238.10:FF:000072">
    <property type="entry name" value="Hippocalcin-like protein 1"/>
    <property type="match status" value="1"/>
</dbReference>
<dbReference type="Gene3D" id="1.10.238.10">
    <property type="entry name" value="EF-hand"/>
    <property type="match status" value="2"/>
</dbReference>
<dbReference type="InterPro" id="IPR011992">
    <property type="entry name" value="EF-hand-dom_pair"/>
</dbReference>
<dbReference type="InterPro" id="IPR018247">
    <property type="entry name" value="EF_Hand_1_Ca_BS"/>
</dbReference>
<dbReference type="InterPro" id="IPR002048">
    <property type="entry name" value="EF_hand_dom"/>
</dbReference>
<dbReference type="InterPro" id="IPR028846">
    <property type="entry name" value="Recoverin"/>
</dbReference>
<dbReference type="PANTHER" id="PTHR23055">
    <property type="entry name" value="CALCIUM BINDING PROTEINS"/>
    <property type="match status" value="1"/>
</dbReference>
<dbReference type="PANTHER" id="PTHR23055:SF79">
    <property type="entry name" value="HIPPOCALCIN-LIKE PROTEIN 1"/>
    <property type="match status" value="1"/>
</dbReference>
<dbReference type="Pfam" id="PF13499">
    <property type="entry name" value="EF-hand_7"/>
    <property type="match status" value="2"/>
</dbReference>
<dbReference type="PRINTS" id="PR00450">
    <property type="entry name" value="RECOVERIN"/>
</dbReference>
<dbReference type="SMART" id="SM00054">
    <property type="entry name" value="EFh"/>
    <property type="match status" value="3"/>
</dbReference>
<dbReference type="SUPFAM" id="SSF47473">
    <property type="entry name" value="EF-hand"/>
    <property type="match status" value="1"/>
</dbReference>
<dbReference type="PROSITE" id="PS00018">
    <property type="entry name" value="EF_HAND_1"/>
    <property type="match status" value="3"/>
</dbReference>
<dbReference type="PROSITE" id="PS50222">
    <property type="entry name" value="EF_HAND_2"/>
    <property type="match status" value="4"/>
</dbReference>
<feature type="initiator methionine" description="Removed" evidence="1">
    <location>
        <position position="1"/>
    </location>
</feature>
<feature type="chain" id="PRO_0000073775" description="Hippocalcin-like protein 1">
    <location>
        <begin position="2"/>
        <end position="193"/>
    </location>
</feature>
<feature type="domain" description="EF-hand 1" evidence="2">
    <location>
        <begin position="41"/>
        <end position="58"/>
    </location>
</feature>
<feature type="domain" description="EF-hand 2" evidence="2">
    <location>
        <begin position="60"/>
        <end position="95"/>
    </location>
</feature>
<feature type="domain" description="EF-hand 3" evidence="2">
    <location>
        <begin position="96"/>
        <end position="131"/>
    </location>
</feature>
<feature type="domain" description="EF-hand 4" evidence="2">
    <location>
        <begin position="144"/>
        <end position="179"/>
    </location>
</feature>
<feature type="binding site" evidence="2">
    <location>
        <position position="73"/>
    </location>
    <ligand>
        <name>Ca(2+)</name>
        <dbReference type="ChEBI" id="CHEBI:29108"/>
        <label>1</label>
    </ligand>
</feature>
<feature type="binding site" evidence="2">
    <location>
        <position position="75"/>
    </location>
    <ligand>
        <name>Ca(2+)</name>
        <dbReference type="ChEBI" id="CHEBI:29108"/>
        <label>1</label>
    </ligand>
</feature>
<feature type="binding site" evidence="2">
    <location>
        <position position="77"/>
    </location>
    <ligand>
        <name>Ca(2+)</name>
        <dbReference type="ChEBI" id="CHEBI:29108"/>
        <label>1</label>
    </ligand>
</feature>
<feature type="binding site" evidence="2">
    <location>
        <position position="79"/>
    </location>
    <ligand>
        <name>Ca(2+)</name>
        <dbReference type="ChEBI" id="CHEBI:29108"/>
        <label>1</label>
    </ligand>
</feature>
<feature type="binding site" evidence="2">
    <location>
        <position position="84"/>
    </location>
    <ligand>
        <name>Ca(2+)</name>
        <dbReference type="ChEBI" id="CHEBI:29108"/>
        <label>1</label>
    </ligand>
</feature>
<feature type="binding site" evidence="2">
    <location>
        <position position="109"/>
    </location>
    <ligand>
        <name>Ca(2+)</name>
        <dbReference type="ChEBI" id="CHEBI:29108"/>
        <label>2</label>
    </ligand>
</feature>
<feature type="binding site" evidence="2">
    <location>
        <position position="111"/>
    </location>
    <ligand>
        <name>Ca(2+)</name>
        <dbReference type="ChEBI" id="CHEBI:29108"/>
        <label>2</label>
    </ligand>
</feature>
<feature type="binding site" evidence="2">
    <location>
        <position position="113"/>
    </location>
    <ligand>
        <name>Ca(2+)</name>
        <dbReference type="ChEBI" id="CHEBI:29108"/>
        <label>2</label>
    </ligand>
</feature>
<feature type="binding site" evidence="2">
    <location>
        <position position="115"/>
    </location>
    <ligand>
        <name>Ca(2+)</name>
        <dbReference type="ChEBI" id="CHEBI:29108"/>
        <label>2</label>
    </ligand>
</feature>
<feature type="binding site" evidence="2">
    <location>
        <position position="120"/>
    </location>
    <ligand>
        <name>Ca(2+)</name>
        <dbReference type="ChEBI" id="CHEBI:29108"/>
        <label>2</label>
    </ligand>
</feature>
<feature type="binding site" evidence="2">
    <location>
        <position position="157"/>
    </location>
    <ligand>
        <name>Ca(2+)</name>
        <dbReference type="ChEBI" id="CHEBI:29108"/>
        <label>3</label>
    </ligand>
</feature>
<feature type="binding site" evidence="2">
    <location>
        <position position="159"/>
    </location>
    <ligand>
        <name>Ca(2+)</name>
        <dbReference type="ChEBI" id="CHEBI:29108"/>
        <label>3</label>
    </ligand>
</feature>
<feature type="binding site" evidence="2">
    <location>
        <position position="161"/>
    </location>
    <ligand>
        <name>Ca(2+)</name>
        <dbReference type="ChEBI" id="CHEBI:29108"/>
        <label>3</label>
    </ligand>
</feature>
<feature type="binding site" evidence="2">
    <location>
        <position position="163"/>
    </location>
    <ligand>
        <name>Ca(2+)</name>
        <dbReference type="ChEBI" id="CHEBI:29108"/>
        <label>3</label>
    </ligand>
</feature>
<feature type="binding site" evidence="2">
    <location>
        <position position="168"/>
    </location>
    <ligand>
        <name>Ca(2+)</name>
        <dbReference type="ChEBI" id="CHEBI:29108"/>
        <label>3</label>
    </ligand>
</feature>
<feature type="lipid moiety-binding region" description="N-myristoyl glycine" evidence="1">
    <location>
        <position position="2"/>
    </location>
</feature>
<reference key="1">
    <citation type="journal article" date="1995" name="Oncogene">
        <title>Rem-1, a putative direct target gene of the Myb-Ets fusion oncoprotein in haematopoietic progenitors, is a member of the recoverin family.</title>
        <authorList>
            <person name="Kraut N."/>
            <person name="Frampton J."/>
            <person name="Graf T."/>
        </authorList>
    </citation>
    <scope>NUCLEOTIDE SEQUENCE [MRNA]</scope>
    <scope>TISSUE SPECIFICITY</scope>
    <scope>INDUCTION</scope>
    <source>
        <strain>White leghorn</strain>
    </source>
</reference>